<organism>
    <name type="scientific">Streptococcus equi subsp. zooepidemicus (strain MGCS10565)</name>
    <dbReference type="NCBI Taxonomy" id="552526"/>
    <lineage>
        <taxon>Bacteria</taxon>
        <taxon>Bacillati</taxon>
        <taxon>Bacillota</taxon>
        <taxon>Bacilli</taxon>
        <taxon>Lactobacillales</taxon>
        <taxon>Streptococcaceae</taxon>
        <taxon>Streptococcus</taxon>
    </lineage>
</organism>
<gene>
    <name evidence="1" type="primary">rplU</name>
    <name type="ordered locus">Sez_1135</name>
</gene>
<protein>
    <recommendedName>
        <fullName evidence="1">Large ribosomal subunit protein bL21</fullName>
    </recommendedName>
    <alternativeName>
        <fullName evidence="2">50S ribosomal protein L21</fullName>
    </alternativeName>
</protein>
<feature type="chain" id="PRO_1000143853" description="Large ribosomal subunit protein bL21">
    <location>
        <begin position="1"/>
        <end position="104"/>
    </location>
</feature>
<sequence length="104" mass="11183">MSTYAIIKTGGKQVKVEVGQAIYVEKIDAEAGAEITFNEVVLVGGDKTVVGTPVVEGATVVGTVEKQGKQKKVVTFKYKPKKGSHRKQGHRQPYTKVVINAIKA</sequence>
<proteinExistence type="inferred from homology"/>
<comment type="function">
    <text evidence="1">This protein binds to 23S rRNA in the presence of protein L20.</text>
</comment>
<comment type="subunit">
    <text evidence="1">Part of the 50S ribosomal subunit. Contacts protein L20.</text>
</comment>
<comment type="similarity">
    <text evidence="1">Belongs to the bacterial ribosomal protein bL21 family.</text>
</comment>
<keyword id="KW-0687">Ribonucleoprotein</keyword>
<keyword id="KW-0689">Ribosomal protein</keyword>
<keyword id="KW-0694">RNA-binding</keyword>
<keyword id="KW-0699">rRNA-binding</keyword>
<name>RL21_STREM</name>
<dbReference type="EMBL" id="CP001129">
    <property type="protein sequence ID" value="ACG62487.1"/>
    <property type="molecule type" value="Genomic_DNA"/>
</dbReference>
<dbReference type="RefSeq" id="WP_012515752.1">
    <property type="nucleotide sequence ID" value="NC_011134.1"/>
</dbReference>
<dbReference type="SMR" id="B4U3C0"/>
<dbReference type="GeneID" id="83705030"/>
<dbReference type="KEGG" id="sez:Sez_1135"/>
<dbReference type="HOGENOM" id="CLU_061463_3_1_9"/>
<dbReference type="Proteomes" id="UP000001873">
    <property type="component" value="Chromosome"/>
</dbReference>
<dbReference type="GO" id="GO:0005737">
    <property type="term" value="C:cytoplasm"/>
    <property type="evidence" value="ECO:0007669"/>
    <property type="project" value="UniProtKB-ARBA"/>
</dbReference>
<dbReference type="GO" id="GO:1990904">
    <property type="term" value="C:ribonucleoprotein complex"/>
    <property type="evidence" value="ECO:0007669"/>
    <property type="project" value="UniProtKB-KW"/>
</dbReference>
<dbReference type="GO" id="GO:0005840">
    <property type="term" value="C:ribosome"/>
    <property type="evidence" value="ECO:0007669"/>
    <property type="project" value="UniProtKB-KW"/>
</dbReference>
<dbReference type="GO" id="GO:0019843">
    <property type="term" value="F:rRNA binding"/>
    <property type="evidence" value="ECO:0007669"/>
    <property type="project" value="UniProtKB-UniRule"/>
</dbReference>
<dbReference type="GO" id="GO:0003735">
    <property type="term" value="F:structural constituent of ribosome"/>
    <property type="evidence" value="ECO:0007669"/>
    <property type="project" value="InterPro"/>
</dbReference>
<dbReference type="GO" id="GO:0006412">
    <property type="term" value="P:translation"/>
    <property type="evidence" value="ECO:0007669"/>
    <property type="project" value="UniProtKB-UniRule"/>
</dbReference>
<dbReference type="HAMAP" id="MF_01363">
    <property type="entry name" value="Ribosomal_bL21"/>
    <property type="match status" value="1"/>
</dbReference>
<dbReference type="InterPro" id="IPR028909">
    <property type="entry name" value="bL21-like"/>
</dbReference>
<dbReference type="InterPro" id="IPR036164">
    <property type="entry name" value="bL21-like_sf"/>
</dbReference>
<dbReference type="InterPro" id="IPR001787">
    <property type="entry name" value="Ribosomal_bL21"/>
</dbReference>
<dbReference type="InterPro" id="IPR018258">
    <property type="entry name" value="Ribosomal_bL21_CS"/>
</dbReference>
<dbReference type="NCBIfam" id="TIGR00061">
    <property type="entry name" value="L21"/>
    <property type="match status" value="1"/>
</dbReference>
<dbReference type="PANTHER" id="PTHR21349">
    <property type="entry name" value="50S RIBOSOMAL PROTEIN L21"/>
    <property type="match status" value="1"/>
</dbReference>
<dbReference type="PANTHER" id="PTHR21349:SF0">
    <property type="entry name" value="LARGE RIBOSOMAL SUBUNIT PROTEIN BL21M"/>
    <property type="match status" value="1"/>
</dbReference>
<dbReference type="Pfam" id="PF00829">
    <property type="entry name" value="Ribosomal_L21p"/>
    <property type="match status" value="1"/>
</dbReference>
<dbReference type="SUPFAM" id="SSF141091">
    <property type="entry name" value="L21p-like"/>
    <property type="match status" value="1"/>
</dbReference>
<dbReference type="PROSITE" id="PS01169">
    <property type="entry name" value="RIBOSOMAL_L21"/>
    <property type="match status" value="1"/>
</dbReference>
<evidence type="ECO:0000255" key="1">
    <source>
        <dbReference type="HAMAP-Rule" id="MF_01363"/>
    </source>
</evidence>
<evidence type="ECO:0000305" key="2"/>
<reference key="1">
    <citation type="journal article" date="2008" name="PLoS ONE">
        <title>Genome sequence of a lancefield group C Streptococcus zooepidemicus strain causing epidemic nephritis: new information about an old disease.</title>
        <authorList>
            <person name="Beres S.B."/>
            <person name="Sesso R."/>
            <person name="Pinto S.W.L."/>
            <person name="Hoe N.P."/>
            <person name="Porcella S.F."/>
            <person name="Deleo F.R."/>
            <person name="Musser J.M."/>
        </authorList>
    </citation>
    <scope>NUCLEOTIDE SEQUENCE [LARGE SCALE GENOMIC DNA]</scope>
    <source>
        <strain>MGCS10565</strain>
    </source>
</reference>
<accession>B4U3C0</accession>